<proteinExistence type="inferred from homology"/>
<comment type="similarity">
    <text evidence="1">Belongs to the SufE family.</text>
</comment>
<name>YA00_RHIME</name>
<accession>Q52967</accession>
<gene>
    <name type="ordered locus">R01000</name>
    <name type="ORF">SMc00118</name>
</gene>
<feature type="chain" id="PRO_0000202142" description="Uncharacterized SufE-like protein R01000">
    <location>
        <begin position="1"/>
        <end position="140"/>
    </location>
</feature>
<feature type="sequence conflict" description="In Ref. 1." evidence="1" ref="1">
    <original>RLP</original>
    <variation>ACPPDWQRVRALRGKVRNGFPSGS</variation>
    <location>
        <begin position="137"/>
        <end position="139"/>
    </location>
</feature>
<evidence type="ECO:0000305" key="1"/>
<reference key="1">
    <citation type="journal article" date="1995" name="Mol. Plant Microbe Interact.">
        <title>Molecular analysis of the Rhizobium meliloti mucR gene regulating the biosynthesis of the exopolysaccharides succinoglycan and galactoglucan.</title>
        <authorList>
            <person name="Keller M."/>
            <person name="Roxlau A."/>
            <person name="Weng W.M."/>
            <person name="Schmidt M."/>
            <person name="Quandt J."/>
            <person name="Niehaus K."/>
            <person name="Jording D."/>
            <person name="Arnold W."/>
            <person name="Puehler A."/>
        </authorList>
    </citation>
    <scope>NUCLEOTIDE SEQUENCE [GENOMIC DNA]</scope>
    <source>
        <strain>RCR2011 / SU47</strain>
    </source>
</reference>
<reference key="2">
    <citation type="journal article" date="2001" name="Proc. Natl. Acad. Sci. U.S.A.">
        <title>Analysis of the chromosome sequence of the legume symbiont Sinorhizobium meliloti strain 1021.</title>
        <authorList>
            <person name="Capela D."/>
            <person name="Barloy-Hubler F."/>
            <person name="Gouzy J."/>
            <person name="Bothe G."/>
            <person name="Ampe F."/>
            <person name="Batut J."/>
            <person name="Boistard P."/>
            <person name="Becker A."/>
            <person name="Boutry M."/>
            <person name="Cadieu E."/>
            <person name="Dreano S."/>
            <person name="Gloux S."/>
            <person name="Godrie T."/>
            <person name="Goffeau A."/>
            <person name="Kahn D."/>
            <person name="Kiss E."/>
            <person name="Lelaure V."/>
            <person name="Masuy D."/>
            <person name="Pohl T."/>
            <person name="Portetelle D."/>
            <person name="Puehler A."/>
            <person name="Purnelle B."/>
            <person name="Ramsperger U."/>
            <person name="Renard C."/>
            <person name="Thebault P."/>
            <person name="Vandenbol M."/>
            <person name="Weidner S."/>
            <person name="Galibert F."/>
        </authorList>
    </citation>
    <scope>NUCLEOTIDE SEQUENCE [LARGE SCALE GENOMIC DNA]</scope>
    <source>
        <strain>1021</strain>
    </source>
</reference>
<reference key="3">
    <citation type="journal article" date="2001" name="Science">
        <title>The composite genome of the legume symbiont Sinorhizobium meliloti.</title>
        <authorList>
            <person name="Galibert F."/>
            <person name="Finan T.M."/>
            <person name="Long S.R."/>
            <person name="Puehler A."/>
            <person name="Abola P."/>
            <person name="Ampe F."/>
            <person name="Barloy-Hubler F."/>
            <person name="Barnett M.J."/>
            <person name="Becker A."/>
            <person name="Boistard P."/>
            <person name="Bothe G."/>
            <person name="Boutry M."/>
            <person name="Bowser L."/>
            <person name="Buhrmester J."/>
            <person name="Cadieu E."/>
            <person name="Capela D."/>
            <person name="Chain P."/>
            <person name="Cowie A."/>
            <person name="Davis R.W."/>
            <person name="Dreano S."/>
            <person name="Federspiel N.A."/>
            <person name="Fisher R.F."/>
            <person name="Gloux S."/>
            <person name="Godrie T."/>
            <person name="Goffeau A."/>
            <person name="Golding B."/>
            <person name="Gouzy J."/>
            <person name="Gurjal M."/>
            <person name="Hernandez-Lucas I."/>
            <person name="Hong A."/>
            <person name="Huizar L."/>
            <person name="Hyman R.W."/>
            <person name="Jones T."/>
            <person name="Kahn D."/>
            <person name="Kahn M.L."/>
            <person name="Kalman S."/>
            <person name="Keating D.H."/>
            <person name="Kiss E."/>
            <person name="Komp C."/>
            <person name="Lelaure V."/>
            <person name="Masuy D."/>
            <person name="Palm C."/>
            <person name="Peck M.C."/>
            <person name="Pohl T.M."/>
            <person name="Portetelle D."/>
            <person name="Purnelle B."/>
            <person name="Ramsperger U."/>
            <person name="Surzycki R."/>
            <person name="Thebault P."/>
            <person name="Vandenbol M."/>
            <person name="Vorhoelter F.J."/>
            <person name="Weidner S."/>
            <person name="Wells D.H."/>
            <person name="Wong K."/>
            <person name="Yeh K.-C."/>
            <person name="Batut J."/>
        </authorList>
    </citation>
    <scope>NUCLEOTIDE SEQUENCE [LARGE SCALE GENOMIC DNA]</scope>
    <source>
        <strain>1021</strain>
    </source>
</reference>
<protein>
    <recommendedName>
        <fullName>Uncharacterized SufE-like protein R01000</fullName>
    </recommendedName>
</protein>
<sequence>MTSLDQIIDDFAFLDEWEDRYRYVIELGKNLPEMPEVSRTSENKVQGCASQVWLVTHATGDAEDPLLTFEGESDAHIVRGLVAIVLAIFSGKRASEITRIDALDIFGKIGLIEHLSSQRANGLRSMIRRIKSEAEGRLPA</sequence>
<dbReference type="EMBL" id="L37353">
    <property type="protein sequence ID" value="AAA74240.1"/>
    <property type="molecule type" value="Genomic_DNA"/>
</dbReference>
<dbReference type="EMBL" id="AL591688">
    <property type="protein sequence ID" value="CAC45572.1"/>
    <property type="molecule type" value="Genomic_DNA"/>
</dbReference>
<dbReference type="RefSeq" id="NP_385106.1">
    <property type="nucleotide sequence ID" value="NC_003047.1"/>
</dbReference>
<dbReference type="RefSeq" id="WP_003527382.1">
    <property type="nucleotide sequence ID" value="NC_003047.1"/>
</dbReference>
<dbReference type="SMR" id="Q52967"/>
<dbReference type="EnsemblBacteria" id="CAC45572">
    <property type="protein sequence ID" value="CAC45572"/>
    <property type="gene ID" value="SMc00118"/>
</dbReference>
<dbReference type="KEGG" id="sme:SMc00118"/>
<dbReference type="PATRIC" id="fig|266834.11.peg.2401"/>
<dbReference type="eggNOG" id="COG2166">
    <property type="taxonomic scope" value="Bacteria"/>
</dbReference>
<dbReference type="HOGENOM" id="CLU_124502_1_0_5"/>
<dbReference type="OrthoDB" id="9799320at2"/>
<dbReference type="Proteomes" id="UP000001976">
    <property type="component" value="Chromosome"/>
</dbReference>
<dbReference type="Gene3D" id="3.90.1010.10">
    <property type="match status" value="1"/>
</dbReference>
<dbReference type="InterPro" id="IPR003808">
    <property type="entry name" value="Fe-S_metab-assoc_dom"/>
</dbReference>
<dbReference type="PANTHER" id="PTHR43597:SF5">
    <property type="entry name" value="SUFE-LIKE PROTEIN 2, CHLOROPLASTIC"/>
    <property type="match status" value="1"/>
</dbReference>
<dbReference type="PANTHER" id="PTHR43597">
    <property type="entry name" value="SULFUR ACCEPTOR PROTEIN CSDE"/>
    <property type="match status" value="1"/>
</dbReference>
<dbReference type="Pfam" id="PF02657">
    <property type="entry name" value="SufE"/>
    <property type="match status" value="1"/>
</dbReference>
<dbReference type="SUPFAM" id="SSF82649">
    <property type="entry name" value="SufE/NifU"/>
    <property type="match status" value="1"/>
</dbReference>
<organism>
    <name type="scientific">Rhizobium meliloti (strain 1021)</name>
    <name type="common">Ensifer meliloti</name>
    <name type="synonym">Sinorhizobium meliloti</name>
    <dbReference type="NCBI Taxonomy" id="266834"/>
    <lineage>
        <taxon>Bacteria</taxon>
        <taxon>Pseudomonadati</taxon>
        <taxon>Pseudomonadota</taxon>
        <taxon>Alphaproteobacteria</taxon>
        <taxon>Hyphomicrobiales</taxon>
        <taxon>Rhizobiaceae</taxon>
        <taxon>Sinorhizobium/Ensifer group</taxon>
        <taxon>Sinorhizobium</taxon>
    </lineage>
</organism>
<keyword id="KW-1185">Reference proteome</keyword>